<accession>Q2MID8</accession>
<geneLocation type="chloroplast"/>
<dbReference type="EMBL" id="DQ347958">
    <property type="protein sequence ID" value="ABC56263.1"/>
    <property type="molecule type" value="Genomic_DNA"/>
</dbReference>
<dbReference type="RefSeq" id="YP_538899.1">
    <property type="nucleotide sequence ID" value="NC_007943.1"/>
</dbReference>
<dbReference type="SMR" id="Q2MID8"/>
<dbReference type="GeneID" id="3989488"/>
<dbReference type="GO" id="GO:0009535">
    <property type="term" value="C:chloroplast thylakoid membrane"/>
    <property type="evidence" value="ECO:0007669"/>
    <property type="project" value="UniProtKB-SubCell"/>
</dbReference>
<dbReference type="GO" id="GO:0005886">
    <property type="term" value="C:plasma membrane"/>
    <property type="evidence" value="ECO:0007669"/>
    <property type="project" value="TreeGrafter"/>
</dbReference>
<dbReference type="GO" id="GO:0020037">
    <property type="term" value="F:heme binding"/>
    <property type="evidence" value="ECO:0007669"/>
    <property type="project" value="InterPro"/>
</dbReference>
<dbReference type="GO" id="GO:0017004">
    <property type="term" value="P:cytochrome complex assembly"/>
    <property type="evidence" value="ECO:0007669"/>
    <property type="project" value="UniProtKB-UniRule"/>
</dbReference>
<dbReference type="HAMAP" id="MF_01391">
    <property type="entry name" value="CytC_CcsA"/>
    <property type="match status" value="1"/>
</dbReference>
<dbReference type="InterPro" id="IPR002541">
    <property type="entry name" value="Cyt_c_assembly"/>
</dbReference>
<dbReference type="InterPro" id="IPR017562">
    <property type="entry name" value="Cyt_c_biogenesis_CcsA"/>
</dbReference>
<dbReference type="InterPro" id="IPR045062">
    <property type="entry name" value="Cyt_c_biogenesis_CcsA/CcmC"/>
</dbReference>
<dbReference type="NCBIfam" id="TIGR03144">
    <property type="entry name" value="cytochr_II_ccsB"/>
    <property type="match status" value="1"/>
</dbReference>
<dbReference type="PANTHER" id="PTHR30071:SF1">
    <property type="entry name" value="CYTOCHROME B_B6 PROTEIN-RELATED"/>
    <property type="match status" value="1"/>
</dbReference>
<dbReference type="PANTHER" id="PTHR30071">
    <property type="entry name" value="HEME EXPORTER PROTEIN C"/>
    <property type="match status" value="1"/>
</dbReference>
<dbReference type="Pfam" id="PF01578">
    <property type="entry name" value="Cytochrom_C_asm"/>
    <property type="match status" value="1"/>
</dbReference>
<sequence>MIFSTLEHILTHISFSIVSIVITIHLITFLVDEIVKLYDSSEKGIIVTFFCITGLLVTRWISSGHFPLSDLYESLIFLSWSFSLIHIIPYFKKNVLILSKITGPSAILTQGFATSGILTEIHQSGILVPALQSEWLIMHVSMMILGYAALLCGSLLSVALLVITFRKNRKLFYKSNGFLNESFFLGENVVENTSFFCAKNYYRSQLIQQLDYWSYRVISLGFTFLTIGILSGAVWANEAWGSYWNWDPKETWAFITWIVFAIYLHTRTNRNLRGPNSAIVASIGFLIIWICYFGVNLLGIGLHSYGSFPSTFN</sequence>
<protein>
    <recommendedName>
        <fullName evidence="1">Cytochrome c biogenesis protein CcsA</fullName>
    </recommendedName>
</protein>
<comment type="function">
    <text evidence="1">Required during biogenesis of c-type cytochromes (cytochrome c6 and cytochrome f) at the step of heme attachment.</text>
</comment>
<comment type="subunit">
    <text evidence="1">May interact with Ccs1.</text>
</comment>
<comment type="subcellular location">
    <subcellularLocation>
        <location evidence="1">Plastid</location>
        <location evidence="1">Chloroplast thylakoid membrane</location>
        <topology evidence="1">Multi-pass membrane protein</topology>
    </subcellularLocation>
</comment>
<comment type="similarity">
    <text evidence="1">Belongs to the CcmF/CycK/Ccl1/NrfE/CcsA family.</text>
</comment>
<name>CCSA_SOLBU</name>
<proteinExistence type="inferred from homology"/>
<organism>
    <name type="scientific">Solanum bulbocastanum</name>
    <name type="common">Wild potato</name>
    <dbReference type="NCBI Taxonomy" id="147425"/>
    <lineage>
        <taxon>Eukaryota</taxon>
        <taxon>Viridiplantae</taxon>
        <taxon>Streptophyta</taxon>
        <taxon>Embryophyta</taxon>
        <taxon>Tracheophyta</taxon>
        <taxon>Spermatophyta</taxon>
        <taxon>Magnoliopsida</taxon>
        <taxon>eudicotyledons</taxon>
        <taxon>Gunneridae</taxon>
        <taxon>Pentapetalae</taxon>
        <taxon>asterids</taxon>
        <taxon>lamiids</taxon>
        <taxon>Solanales</taxon>
        <taxon>Solanaceae</taxon>
        <taxon>Solanoideae</taxon>
        <taxon>Solaneae</taxon>
        <taxon>Solanum</taxon>
    </lineage>
</organism>
<evidence type="ECO:0000255" key="1">
    <source>
        <dbReference type="HAMAP-Rule" id="MF_01391"/>
    </source>
</evidence>
<keyword id="KW-0150">Chloroplast</keyword>
<keyword id="KW-0201">Cytochrome c-type biogenesis</keyword>
<keyword id="KW-0472">Membrane</keyword>
<keyword id="KW-0934">Plastid</keyword>
<keyword id="KW-0793">Thylakoid</keyword>
<keyword id="KW-0812">Transmembrane</keyword>
<keyword id="KW-1133">Transmembrane helix</keyword>
<gene>
    <name evidence="1" type="primary">ccsA</name>
</gene>
<reference key="1">
    <citation type="journal article" date="2006" name="Theor. Appl. Genet.">
        <title>Complete chloroplast genome sequences of Solanum bulbocastanum, Solanum lycopersicum and comparative analyses with other Solanaceae genomes.</title>
        <authorList>
            <person name="Daniell H."/>
            <person name="Lee S.-B."/>
            <person name="Grevich J."/>
            <person name="Saski C."/>
            <person name="Quesada-Vargas T."/>
            <person name="Guda C."/>
            <person name="Tomkins J."/>
            <person name="Jansen R.K."/>
        </authorList>
    </citation>
    <scope>NUCLEOTIDE SEQUENCE [LARGE SCALE GENOMIC DNA]</scope>
    <source>
        <strain>cv. PT29</strain>
    </source>
</reference>
<feature type="chain" id="PRO_0000353790" description="Cytochrome c biogenesis protein CcsA">
    <location>
        <begin position="1"/>
        <end position="313"/>
    </location>
</feature>
<feature type="transmembrane region" description="Helical" evidence="1">
    <location>
        <begin position="9"/>
        <end position="29"/>
    </location>
</feature>
<feature type="transmembrane region" description="Helical" evidence="1">
    <location>
        <begin position="44"/>
        <end position="64"/>
    </location>
</feature>
<feature type="transmembrane region" description="Helical" evidence="1">
    <location>
        <begin position="71"/>
        <end position="91"/>
    </location>
</feature>
<feature type="transmembrane region" description="Helical" evidence="1">
    <location>
        <begin position="111"/>
        <end position="131"/>
    </location>
</feature>
<feature type="transmembrane region" description="Helical" evidence="1">
    <location>
        <begin position="143"/>
        <end position="163"/>
    </location>
</feature>
<feature type="transmembrane region" description="Helical" evidence="1">
    <location>
        <begin position="217"/>
        <end position="237"/>
    </location>
</feature>
<feature type="transmembrane region" description="Helical" evidence="1">
    <location>
        <begin position="244"/>
        <end position="264"/>
    </location>
</feature>
<feature type="transmembrane region" description="Helical" evidence="1">
    <location>
        <begin position="278"/>
        <end position="298"/>
    </location>
</feature>